<accession>O60513</accession>
<accession>Q68D68</accession>
<accession>Q9BSW3</accession>
<accession>Q9C078</accession>
<protein>
    <recommendedName>
        <fullName evidence="12">Beta-1,4-galactosyltransferase 4</fullName>
        <shortName>Beta-1,4-GalTase 4</shortName>
        <shortName>Beta4Gal-T4</shortName>
        <shortName>b4Gal-T4</shortName>
        <ecNumber evidence="4 9">2.4.1.-</ecNumber>
    </recommendedName>
    <alternativeName>
        <fullName>Beta-N-acetylglucosaminyl-glycolipid beta-1,4-galactosyltransferase</fullName>
    </alternativeName>
    <alternativeName>
        <fullName>Lactotriaosylceramide beta-1,4-galactosyltransferase</fullName>
        <ecNumber evidence="9">2.4.1.275</ecNumber>
    </alternativeName>
    <alternativeName>
        <fullName>N-acetyllactosamine synthase</fullName>
        <ecNumber evidence="9">2.4.1.90</ecNumber>
    </alternativeName>
    <alternativeName>
        <fullName>Nal synthase</fullName>
    </alternativeName>
    <alternativeName>
        <fullName>UDP-Gal:beta-GlcNAc beta-1,4-galactosyltransferase 4</fullName>
    </alternativeName>
    <alternativeName>
        <fullName>UDP-galactose:beta-N-acetylglucosamine beta-1,4-galactosyltransferase 4</fullName>
    </alternativeName>
</protein>
<evidence type="ECO:0000250" key="1"/>
<evidence type="ECO:0000255" key="2"/>
<evidence type="ECO:0000269" key="3">
    <source>
    </source>
</evidence>
<evidence type="ECO:0000269" key="4">
    <source>
    </source>
</evidence>
<evidence type="ECO:0000269" key="5">
    <source>
    </source>
</evidence>
<evidence type="ECO:0000269" key="6">
    <source>
    </source>
</evidence>
<evidence type="ECO:0000269" key="7">
    <source>
    </source>
</evidence>
<evidence type="ECO:0000269" key="8">
    <source>
    </source>
</evidence>
<evidence type="ECO:0000269" key="9">
    <source>
    </source>
</evidence>
<evidence type="ECO:0000269" key="10">
    <source ref="4"/>
</evidence>
<evidence type="ECO:0000303" key="11">
    <source>
    </source>
</evidence>
<evidence type="ECO:0000305" key="12"/>
<evidence type="ECO:0000305" key="13">
    <source>
    </source>
</evidence>
<evidence type="ECO:0000305" key="14">
    <source>
    </source>
</evidence>
<evidence type="ECO:0000312" key="15">
    <source>
        <dbReference type="HGNC" id="HGNC:927"/>
    </source>
</evidence>
<name>B4GT4_HUMAN</name>
<feature type="chain" id="PRO_0000080542" description="Beta-1,4-galactosyltransferase 4">
    <location>
        <begin position="1"/>
        <end position="344"/>
    </location>
</feature>
<feature type="topological domain" description="Cytoplasmic" evidence="2">
    <location>
        <begin position="1"/>
        <end position="12"/>
    </location>
</feature>
<feature type="transmembrane region" description="Helical; Signal-anchor for type II membrane protein" evidence="2">
    <location>
        <begin position="13"/>
        <end position="38"/>
    </location>
</feature>
<feature type="topological domain" description="Lumenal" evidence="2">
    <location>
        <begin position="39"/>
        <end position="344"/>
    </location>
</feature>
<feature type="binding site" evidence="1">
    <location>
        <begin position="129"/>
        <end position="133"/>
    </location>
    <ligand>
        <name>UDP-alpha-D-galactose</name>
        <dbReference type="ChEBI" id="CHEBI:66914"/>
    </ligand>
</feature>
<feature type="binding site" evidence="1">
    <location>
        <begin position="168"/>
        <end position="170"/>
    </location>
    <ligand>
        <name>UDP-alpha-D-galactose</name>
        <dbReference type="ChEBI" id="CHEBI:66914"/>
    </ligand>
</feature>
<feature type="binding site" evidence="1">
    <location>
        <begin position="195"/>
        <end position="196"/>
    </location>
    <ligand>
        <name>UDP-alpha-D-galactose</name>
        <dbReference type="ChEBI" id="CHEBI:66914"/>
    </ligand>
</feature>
<feature type="binding site" evidence="1">
    <location>
        <position position="196"/>
    </location>
    <ligand>
        <name>Mn(2+)</name>
        <dbReference type="ChEBI" id="CHEBI:29035"/>
    </ligand>
</feature>
<feature type="binding site" evidence="1">
    <location>
        <position position="224"/>
    </location>
    <ligand>
        <name>UDP-alpha-D-galactose</name>
        <dbReference type="ChEBI" id="CHEBI:66914"/>
    </ligand>
</feature>
<feature type="binding site" evidence="1">
    <location>
        <position position="256"/>
    </location>
    <ligand>
        <name>UDP-alpha-D-galactose</name>
        <dbReference type="ChEBI" id="CHEBI:66914"/>
    </ligand>
</feature>
<feature type="binding site" evidence="1">
    <location>
        <begin position="258"/>
        <end position="261"/>
    </location>
    <ligand>
        <name>N-acetyl-D-glucosamine</name>
        <dbReference type="ChEBI" id="CHEBI:506227"/>
    </ligand>
</feature>
<feature type="binding site" evidence="1">
    <location>
        <begin position="289"/>
        <end position="291"/>
    </location>
    <ligand>
        <name>UDP-alpha-D-galactose</name>
        <dbReference type="ChEBI" id="CHEBI:66914"/>
    </ligand>
</feature>
<feature type="binding site" evidence="1">
    <location>
        <position position="289"/>
    </location>
    <ligand>
        <name>Mn(2+)</name>
        <dbReference type="ChEBI" id="CHEBI:29035"/>
    </ligand>
</feature>
<feature type="binding site" evidence="1">
    <location>
        <position position="301"/>
    </location>
    <ligand>
        <name>N-acetyl-D-glucosamine</name>
        <dbReference type="ChEBI" id="CHEBI:506227"/>
    </ligand>
</feature>
<feature type="glycosylation site" description="N-linked (GlcNAc...) asparagine" evidence="8">
    <location>
        <position position="220"/>
    </location>
</feature>
<feature type="glycosylation site" description="N-linked (GlcNAc...) asparagine" evidence="8">
    <location>
        <position position="335"/>
    </location>
</feature>
<feature type="disulfide bond" evidence="1">
    <location>
        <begin position="77"/>
        <end position="118"/>
    </location>
</feature>
<feature type="disulfide bond" evidence="1">
    <location>
        <begin position="189"/>
        <end position="208"/>
    </location>
</feature>
<feature type="sequence variant" id="VAR_022697" description="In dbSNP:rs3764779." evidence="5 7 10">
    <original>Q</original>
    <variation>E</variation>
    <location>
        <position position="116"/>
    </location>
</feature>
<feature type="mutagenesis site" description="Has no impact on N-glycosylation." evidence="8">
    <original>T</original>
    <variation>A</variation>
    <location>
        <position position="6"/>
    </location>
</feature>
<feature type="mutagenesis site" description="Has no impact on localization to the Golgi apparatus. Decreases N-glycosylation. Impairs the catalytic activity. Impairs keratan sulfate biosynthesis; when associated with A-337." evidence="8">
    <original>T</original>
    <variation>A</variation>
    <location>
        <position position="222"/>
    </location>
</feature>
<feature type="mutagenesis site" description="Impairs localization to the Golgi apparatus. Abolishes N-glycosylation. Impairs the interaction with SLC35A/UGT1. Impairs the catalytic activity. Impairs keratan sulfate biosynthesis; when associated with A-222." evidence="8">
    <original>T</original>
    <variation>A</variation>
    <location>
        <position position="337"/>
    </location>
</feature>
<feature type="sequence conflict" description="In Ref. 4; AAG50147." evidence="12" ref="4">
    <original>L</original>
    <variation>R</variation>
    <location>
        <position position="182"/>
    </location>
</feature>
<organism>
    <name type="scientific">Homo sapiens</name>
    <name type="common">Human</name>
    <dbReference type="NCBI Taxonomy" id="9606"/>
    <lineage>
        <taxon>Eukaryota</taxon>
        <taxon>Metazoa</taxon>
        <taxon>Chordata</taxon>
        <taxon>Craniata</taxon>
        <taxon>Vertebrata</taxon>
        <taxon>Euteleostomi</taxon>
        <taxon>Mammalia</taxon>
        <taxon>Eutheria</taxon>
        <taxon>Euarchontoglires</taxon>
        <taxon>Primates</taxon>
        <taxon>Haplorrhini</taxon>
        <taxon>Catarrhini</taxon>
        <taxon>Hominidae</taxon>
        <taxon>Homo</taxon>
    </lineage>
</organism>
<keyword id="KW-1015">Disulfide bond</keyword>
<keyword id="KW-0325">Glycoprotein</keyword>
<keyword id="KW-0328">Glycosyltransferase</keyword>
<keyword id="KW-0333">Golgi apparatus</keyword>
<keyword id="KW-0443">Lipid metabolism</keyword>
<keyword id="KW-0464">Manganese</keyword>
<keyword id="KW-0472">Membrane</keyword>
<keyword id="KW-0479">Metal-binding</keyword>
<keyword id="KW-1267">Proteomics identification</keyword>
<keyword id="KW-1185">Reference proteome</keyword>
<keyword id="KW-0964">Secreted</keyword>
<keyword id="KW-0735">Signal-anchor</keyword>
<keyword id="KW-0808">Transferase</keyword>
<keyword id="KW-0812">Transmembrane</keyword>
<keyword id="KW-1133">Transmembrane helix</keyword>
<sequence length="344" mass="40041">MGFNLTFHLSYKFRLLLLLTLCLTVVGWATSNYFVGAIQEIPKAKEFMANFHKTLILGKGKTLTNEASTKKVELDNCPSVSPYLRGQSKLIFKPDLTLEEVQAENPKVSRGRYRPQECKALQRVAILVPHRNREKHLMYLLEHLHPFLQRQQLDYGIYVIHQAEGKKFNRAKLLNVGYLEALKEENWDCFIFHDVDLVPENDFNLYKCEEHPKHLVVGRNSTGYRLRYSGYFGGVTALSREQFFKVNGFSNNYWGWGGEDDDLRLRVELQRMKISRPLPEVGKYTMVFHTRDKGNEVNAERMKLLHQVSRVWRTDGLSSCSYKLVSVEHNPLYINITVDFWFGA</sequence>
<dbReference type="EC" id="2.4.1.-" evidence="4 9"/>
<dbReference type="EC" id="2.4.1.275" evidence="9"/>
<dbReference type="EC" id="2.4.1.90" evidence="9"/>
<dbReference type="EMBL" id="AF038662">
    <property type="protein sequence ID" value="AAC39735.1"/>
    <property type="molecule type" value="mRNA"/>
</dbReference>
<dbReference type="EMBL" id="AF022367">
    <property type="protein sequence ID" value="AAC72493.1"/>
    <property type="molecule type" value="mRNA"/>
</dbReference>
<dbReference type="EMBL" id="AB024436">
    <property type="protein sequence ID" value="BAA75821.1"/>
    <property type="molecule type" value="mRNA"/>
</dbReference>
<dbReference type="EMBL" id="AF020920">
    <property type="protein sequence ID" value="AAG50147.1"/>
    <property type="molecule type" value="mRNA"/>
</dbReference>
<dbReference type="EMBL" id="AY359008">
    <property type="protein sequence ID" value="AAQ89367.1"/>
    <property type="molecule type" value="mRNA"/>
</dbReference>
<dbReference type="EMBL" id="CR749555">
    <property type="protein sequence ID" value="CAH18352.1"/>
    <property type="molecule type" value="mRNA"/>
</dbReference>
<dbReference type="EMBL" id="BC004523">
    <property type="protein sequence ID" value="AAH04523.1"/>
    <property type="molecule type" value="mRNA"/>
</dbReference>
<dbReference type="EMBL" id="BC062618">
    <property type="protein sequence ID" value="AAH62618.1"/>
    <property type="molecule type" value="mRNA"/>
</dbReference>
<dbReference type="CCDS" id="CCDS2986.1"/>
<dbReference type="RefSeq" id="NP_003769.1">
    <property type="nucleotide sequence ID" value="NM_003778.4"/>
</dbReference>
<dbReference type="RefSeq" id="NP_997708.1">
    <property type="nucleotide sequence ID" value="NM_212543.2"/>
</dbReference>
<dbReference type="RefSeq" id="XP_005247912.1">
    <property type="nucleotide sequence ID" value="XM_005247855.1"/>
</dbReference>
<dbReference type="RefSeq" id="XP_006713861.1">
    <property type="nucleotide sequence ID" value="XM_006713798.4"/>
</dbReference>
<dbReference type="RefSeq" id="XP_006713862.1">
    <property type="nucleotide sequence ID" value="XM_006713799.4"/>
</dbReference>
<dbReference type="RefSeq" id="XP_006713863.1">
    <property type="nucleotide sequence ID" value="XM_006713800.3"/>
</dbReference>
<dbReference type="RefSeq" id="XP_006713864.1">
    <property type="nucleotide sequence ID" value="XM_006713801.4"/>
</dbReference>
<dbReference type="RefSeq" id="XP_011511562.1">
    <property type="nucleotide sequence ID" value="XM_011513260.1"/>
</dbReference>
<dbReference type="RefSeq" id="XP_024309573.1">
    <property type="nucleotide sequence ID" value="XM_024453805.2"/>
</dbReference>
<dbReference type="RefSeq" id="XP_024309574.1">
    <property type="nucleotide sequence ID" value="XM_024453806.2"/>
</dbReference>
<dbReference type="RefSeq" id="XP_024309575.1">
    <property type="nucleotide sequence ID" value="XM_024453807.1"/>
</dbReference>
<dbReference type="RefSeq" id="XP_047305076.1">
    <property type="nucleotide sequence ID" value="XM_047449120.1"/>
</dbReference>
<dbReference type="RefSeq" id="XP_047305077.1">
    <property type="nucleotide sequence ID" value="XM_047449121.1"/>
</dbReference>
<dbReference type="RefSeq" id="XP_047305078.1">
    <property type="nucleotide sequence ID" value="XM_047449122.1"/>
</dbReference>
<dbReference type="RefSeq" id="XP_047305079.1">
    <property type="nucleotide sequence ID" value="XM_047449123.1"/>
</dbReference>
<dbReference type="RefSeq" id="XP_047305080.1">
    <property type="nucleotide sequence ID" value="XM_047449124.1"/>
</dbReference>
<dbReference type="RefSeq" id="XP_054204216.1">
    <property type="nucleotide sequence ID" value="XM_054348241.1"/>
</dbReference>
<dbReference type="RefSeq" id="XP_054204217.1">
    <property type="nucleotide sequence ID" value="XM_054348242.1"/>
</dbReference>
<dbReference type="RefSeq" id="XP_054204218.1">
    <property type="nucleotide sequence ID" value="XM_054348243.1"/>
</dbReference>
<dbReference type="RefSeq" id="XP_054204219.1">
    <property type="nucleotide sequence ID" value="XM_054348244.1"/>
</dbReference>
<dbReference type="RefSeq" id="XP_054204220.1">
    <property type="nucleotide sequence ID" value="XM_054348245.1"/>
</dbReference>
<dbReference type="RefSeq" id="XP_054204221.1">
    <property type="nucleotide sequence ID" value="XM_054348246.1"/>
</dbReference>
<dbReference type="RefSeq" id="XP_054204222.1">
    <property type="nucleotide sequence ID" value="XM_054348247.1"/>
</dbReference>
<dbReference type="RefSeq" id="XP_054204223.1">
    <property type="nucleotide sequence ID" value="XM_054348248.1"/>
</dbReference>
<dbReference type="RefSeq" id="XP_054204224.1">
    <property type="nucleotide sequence ID" value="XM_054348249.1"/>
</dbReference>
<dbReference type="RefSeq" id="XP_054204225.1">
    <property type="nucleotide sequence ID" value="XM_054348250.1"/>
</dbReference>
<dbReference type="RefSeq" id="XP_054204226.1">
    <property type="nucleotide sequence ID" value="XM_054348251.1"/>
</dbReference>
<dbReference type="RefSeq" id="XP_054204227.1">
    <property type="nucleotide sequence ID" value="XM_054348252.1"/>
</dbReference>
<dbReference type="RefSeq" id="XP_054204228.1">
    <property type="nucleotide sequence ID" value="XM_054348253.1"/>
</dbReference>
<dbReference type="RefSeq" id="XP_054204229.1">
    <property type="nucleotide sequence ID" value="XM_054348254.1"/>
</dbReference>
<dbReference type="SMR" id="O60513"/>
<dbReference type="BioGRID" id="114245">
    <property type="interactions" value="44"/>
</dbReference>
<dbReference type="FunCoup" id="O60513">
    <property type="interactions" value="1098"/>
</dbReference>
<dbReference type="IntAct" id="O60513">
    <property type="interactions" value="31"/>
</dbReference>
<dbReference type="STRING" id="9606.ENSP00000420161"/>
<dbReference type="DrugBank" id="DB00141">
    <property type="generic name" value="N-Acetylglucosamine"/>
</dbReference>
<dbReference type="SwissLipids" id="SLP:000000791"/>
<dbReference type="CAZy" id="GT7">
    <property type="family name" value="Glycosyltransferase Family 7"/>
</dbReference>
<dbReference type="GlyCosmos" id="O60513">
    <property type="glycosylation" value="3 sites, 1 glycan"/>
</dbReference>
<dbReference type="GlyGen" id="O60513">
    <property type="glycosylation" value="4 sites, 2 O-linked glycans (2 sites)"/>
</dbReference>
<dbReference type="iPTMnet" id="O60513"/>
<dbReference type="PhosphoSitePlus" id="O60513"/>
<dbReference type="BioMuta" id="B4GALT4"/>
<dbReference type="jPOST" id="O60513"/>
<dbReference type="MassIVE" id="O60513"/>
<dbReference type="PaxDb" id="9606-ENSP00000420161"/>
<dbReference type="PeptideAtlas" id="O60513"/>
<dbReference type="ProteomicsDB" id="49453"/>
<dbReference type="Pumba" id="O60513"/>
<dbReference type="Antibodypedia" id="32692">
    <property type="antibodies" value="214 antibodies from 27 providers"/>
</dbReference>
<dbReference type="DNASU" id="8702"/>
<dbReference type="Ensembl" id="ENST00000359213.7">
    <property type="protein sequence ID" value="ENSP00000352144.3"/>
    <property type="gene ID" value="ENSG00000121578.13"/>
</dbReference>
<dbReference type="Ensembl" id="ENST00000393765.7">
    <property type="protein sequence ID" value="ENSP00000377360.2"/>
    <property type="gene ID" value="ENSG00000121578.13"/>
</dbReference>
<dbReference type="Ensembl" id="ENST00000483209.5">
    <property type="protein sequence ID" value="ENSP00000420161.1"/>
    <property type="gene ID" value="ENSG00000121578.13"/>
</dbReference>
<dbReference type="GeneID" id="8702"/>
<dbReference type="KEGG" id="hsa:8702"/>
<dbReference type="MANE-Select" id="ENST00000393765.7">
    <property type="protein sequence ID" value="ENSP00000377360.2"/>
    <property type="RefSeq nucleotide sequence ID" value="NM_003778.4"/>
    <property type="RefSeq protein sequence ID" value="NP_003769.1"/>
</dbReference>
<dbReference type="UCSC" id="uc003ecg.4">
    <property type="organism name" value="human"/>
</dbReference>
<dbReference type="AGR" id="HGNC:927"/>
<dbReference type="CTD" id="8702"/>
<dbReference type="DisGeNET" id="8702"/>
<dbReference type="GeneCards" id="B4GALT4"/>
<dbReference type="HGNC" id="HGNC:927">
    <property type="gene designation" value="B4GALT4"/>
</dbReference>
<dbReference type="HPA" id="ENSG00000121578">
    <property type="expression patterns" value="Tissue enhanced (epididymis)"/>
</dbReference>
<dbReference type="MIM" id="604015">
    <property type="type" value="gene"/>
</dbReference>
<dbReference type="neXtProt" id="NX_O60513"/>
<dbReference type="OpenTargets" id="ENSG00000121578"/>
<dbReference type="PharmGKB" id="PA25226"/>
<dbReference type="VEuPathDB" id="HostDB:ENSG00000121578"/>
<dbReference type="eggNOG" id="KOG3916">
    <property type="taxonomic scope" value="Eukaryota"/>
</dbReference>
<dbReference type="GeneTree" id="ENSGT00940000158378"/>
<dbReference type="InParanoid" id="O60513"/>
<dbReference type="OMA" id="TSNYFVD"/>
<dbReference type="OrthoDB" id="10016069at2759"/>
<dbReference type="PAN-GO" id="O60513">
    <property type="GO annotations" value="3 GO annotations based on evolutionary models"/>
</dbReference>
<dbReference type="PhylomeDB" id="O60513"/>
<dbReference type="TreeFam" id="TF312834"/>
<dbReference type="BioCyc" id="MetaCyc:HS04504-MONOMER"/>
<dbReference type="BRENDA" id="2.4.1.275">
    <property type="organism ID" value="2681"/>
</dbReference>
<dbReference type="PathwayCommons" id="O60513"/>
<dbReference type="Reactome" id="R-HSA-2022854">
    <property type="pathway name" value="Keratan sulfate biosynthesis"/>
</dbReference>
<dbReference type="Reactome" id="R-HSA-975577">
    <property type="pathway name" value="N-Glycan antennae elongation"/>
</dbReference>
<dbReference type="SignaLink" id="O60513"/>
<dbReference type="UniPathway" id="UPA00378"/>
<dbReference type="BioGRID-ORCS" id="8702">
    <property type="hits" value="11 hits in 1153 CRISPR screens"/>
</dbReference>
<dbReference type="ChiTaRS" id="B4GALT4">
    <property type="organism name" value="human"/>
</dbReference>
<dbReference type="GeneWiki" id="B4GALT4"/>
<dbReference type="GenomeRNAi" id="8702"/>
<dbReference type="Pharos" id="O60513">
    <property type="development level" value="Tbio"/>
</dbReference>
<dbReference type="PRO" id="PR:O60513"/>
<dbReference type="Proteomes" id="UP000005640">
    <property type="component" value="Chromosome 3"/>
</dbReference>
<dbReference type="RNAct" id="O60513">
    <property type="molecule type" value="protein"/>
</dbReference>
<dbReference type="Bgee" id="ENSG00000121578">
    <property type="expression patterns" value="Expressed in tendon of biceps brachii and 205 other cell types or tissues"/>
</dbReference>
<dbReference type="ExpressionAtlas" id="O60513">
    <property type="expression patterns" value="baseline and differential"/>
</dbReference>
<dbReference type="GO" id="GO:0005576">
    <property type="term" value="C:extracellular region"/>
    <property type="evidence" value="ECO:0007669"/>
    <property type="project" value="UniProtKB-SubCell"/>
</dbReference>
<dbReference type="GO" id="GO:0005794">
    <property type="term" value="C:Golgi apparatus"/>
    <property type="evidence" value="ECO:0000314"/>
    <property type="project" value="HPA"/>
</dbReference>
<dbReference type="GO" id="GO:0000139">
    <property type="term" value="C:Golgi membrane"/>
    <property type="evidence" value="ECO:0000314"/>
    <property type="project" value="UniProtKB"/>
</dbReference>
<dbReference type="GO" id="GO:0016020">
    <property type="term" value="C:membrane"/>
    <property type="evidence" value="ECO:0000304"/>
    <property type="project" value="ProtInc"/>
</dbReference>
<dbReference type="GO" id="GO:0008378">
    <property type="term" value="F:galactosyltransferase activity"/>
    <property type="evidence" value="ECO:0000318"/>
    <property type="project" value="GO_Central"/>
</dbReference>
<dbReference type="GO" id="GO:0046872">
    <property type="term" value="F:metal ion binding"/>
    <property type="evidence" value="ECO:0007669"/>
    <property type="project" value="UniProtKB-KW"/>
</dbReference>
<dbReference type="GO" id="GO:0003945">
    <property type="term" value="F:N-acetyllactosamine synthase activity"/>
    <property type="evidence" value="ECO:0000314"/>
    <property type="project" value="UniProtKB"/>
</dbReference>
<dbReference type="GO" id="GO:0035250">
    <property type="term" value="F:UDP-galactosyltransferase activity"/>
    <property type="evidence" value="ECO:0000314"/>
    <property type="project" value="UniProtKB"/>
</dbReference>
<dbReference type="GO" id="GO:0005975">
    <property type="term" value="P:carbohydrate metabolic process"/>
    <property type="evidence" value="ECO:0007669"/>
    <property type="project" value="InterPro"/>
</dbReference>
<dbReference type="GO" id="GO:0070085">
    <property type="term" value="P:glycosylation"/>
    <property type="evidence" value="ECO:0000318"/>
    <property type="project" value="GO_Central"/>
</dbReference>
<dbReference type="GO" id="GO:0018146">
    <property type="term" value="P:keratan sulfate proteoglycan biosynthetic process"/>
    <property type="evidence" value="ECO:0000314"/>
    <property type="project" value="UniProtKB"/>
</dbReference>
<dbReference type="GO" id="GO:0001572">
    <property type="term" value="P:lactosylceramide biosynthetic process"/>
    <property type="evidence" value="ECO:0000314"/>
    <property type="project" value="UniProtKB"/>
</dbReference>
<dbReference type="GO" id="GO:0006643">
    <property type="term" value="P:membrane lipid metabolic process"/>
    <property type="evidence" value="ECO:0000304"/>
    <property type="project" value="ProtInc"/>
</dbReference>
<dbReference type="GO" id="GO:0006486">
    <property type="term" value="P:protein glycosylation"/>
    <property type="evidence" value="ECO:0007669"/>
    <property type="project" value="UniProtKB-UniPathway"/>
</dbReference>
<dbReference type="CDD" id="cd00899">
    <property type="entry name" value="b4GalT"/>
    <property type="match status" value="1"/>
</dbReference>
<dbReference type="FunFam" id="3.90.550.10:FF:000028">
    <property type="entry name" value="beta-1,4-galactosyltransferase 1"/>
    <property type="match status" value="1"/>
</dbReference>
<dbReference type="Gene3D" id="3.90.550.10">
    <property type="entry name" value="Spore Coat Polysaccharide Biosynthesis Protein SpsA, Chain A"/>
    <property type="match status" value="1"/>
</dbReference>
<dbReference type="InterPro" id="IPR003859">
    <property type="entry name" value="Galactosyl_T"/>
</dbReference>
<dbReference type="InterPro" id="IPR027791">
    <property type="entry name" value="Galactosyl_T_C"/>
</dbReference>
<dbReference type="InterPro" id="IPR027995">
    <property type="entry name" value="Galactosyl_T_N"/>
</dbReference>
<dbReference type="InterPro" id="IPR029044">
    <property type="entry name" value="Nucleotide-diphossugar_trans"/>
</dbReference>
<dbReference type="PANTHER" id="PTHR19300">
    <property type="entry name" value="BETA-1,4-GALACTOSYLTRANSFERASE"/>
    <property type="match status" value="1"/>
</dbReference>
<dbReference type="PANTHER" id="PTHR19300:SF9">
    <property type="entry name" value="BETA-1,4-GALACTOSYLTRANSFERASE 4"/>
    <property type="match status" value="1"/>
</dbReference>
<dbReference type="Pfam" id="PF02709">
    <property type="entry name" value="Glyco_transf_7C"/>
    <property type="match status" value="1"/>
</dbReference>
<dbReference type="Pfam" id="PF13733">
    <property type="entry name" value="Glyco_transf_7N"/>
    <property type="match status" value="1"/>
</dbReference>
<dbReference type="PRINTS" id="PR02050">
    <property type="entry name" value="B14GALTRFASE"/>
</dbReference>
<dbReference type="SUPFAM" id="SSF53448">
    <property type="entry name" value="Nucleotide-diphospho-sugar transferases"/>
    <property type="match status" value="1"/>
</dbReference>
<gene>
    <name evidence="11 15" type="primary">B4GALT4</name>
    <name type="ORF">UNQ552/PRO1109</name>
</gene>
<reference key="1">
    <citation type="journal article" date="1998" name="Glycobiology">
        <title>The expanding beta 4-galactosyltransferase gene family: messages from the databanks.</title>
        <authorList>
            <person name="Lo N.-W."/>
            <person name="Shaper J.H."/>
            <person name="Pevsner J."/>
            <person name="Shaper N.L."/>
        </authorList>
    </citation>
    <scope>NUCLEOTIDE SEQUENCE [MRNA]</scope>
</reference>
<reference key="2">
    <citation type="journal article" date="1998" name="J. Biol. Chem.">
        <title>Cloning of a novel member of the UDP-galactose:beta-N-acetylglucosamine beta1,4-galactosyltransferase family, beta4Gal-T4, involved in glycosphingolipid biosynthesis.</title>
        <authorList>
            <person name="Schwientek T."/>
            <person name="Almeida R."/>
            <person name="Levery S.B."/>
            <person name="Holmes E.H."/>
            <person name="Bennett E."/>
            <person name="Clausen H."/>
        </authorList>
    </citation>
    <scope>NUCLEOTIDE SEQUENCE [MRNA]</scope>
    <scope>FUNCTION</scope>
    <scope>CATALYTIC ACTIVITY</scope>
    <scope>ACTIVITY REGULATION</scope>
    <scope>PATHWAY</scope>
    <scope>BIOPHYSICOCHEMICAL PROPERTIES</scope>
    <scope>TISSUE SPECIFICITY</scope>
</reference>
<reference key="3">
    <citation type="journal article" date="2001" name="Glycobiology">
        <title>Galactosylation of N-linked oligosaccharides by human beta-1,4-galactosyltransferases I, II, III, IV, V, and VI expressed in Sf-9 cells.</title>
        <authorList>
            <person name="Guo S."/>
            <person name="Sato T."/>
            <person name="Shirane K."/>
            <person name="Furukawa K."/>
        </authorList>
    </citation>
    <scope>NUCLEOTIDE SEQUENCE [MRNA]</scope>
    <scope>BIOPHYSICOCHEMICAL PROPERTIES</scope>
</reference>
<reference key="4">
    <citation type="journal article" date="1999" name="Sci. China, Ser. C, Life Sci.">
        <title>Cloning and characterization of a novel member of the human beta-1,4-galactosyltransferase gene family.</title>
        <authorList>
            <person name="Fan Y."/>
            <person name="Yu L."/>
            <person name="Zhang Q."/>
            <person name="Jiang Y."/>
            <person name="Dai F."/>
            <person name="Chen C."/>
            <person name="Tu Q."/>
            <person name="Bi A."/>
            <person name="Xu Y."/>
            <person name="Zhao S."/>
        </authorList>
    </citation>
    <scope>NUCLEOTIDE SEQUENCE [MRNA]</scope>
    <scope>VARIANT GLU-116</scope>
</reference>
<reference key="5">
    <citation type="journal article" date="2003" name="Genome Res.">
        <title>The secreted protein discovery initiative (SPDI), a large-scale effort to identify novel human secreted and transmembrane proteins: a bioinformatics assessment.</title>
        <authorList>
            <person name="Clark H.F."/>
            <person name="Gurney A.L."/>
            <person name="Abaya E."/>
            <person name="Baker K."/>
            <person name="Baldwin D.T."/>
            <person name="Brush J."/>
            <person name="Chen J."/>
            <person name="Chow B."/>
            <person name="Chui C."/>
            <person name="Crowley C."/>
            <person name="Currell B."/>
            <person name="Deuel B."/>
            <person name="Dowd P."/>
            <person name="Eaton D."/>
            <person name="Foster J.S."/>
            <person name="Grimaldi C."/>
            <person name="Gu Q."/>
            <person name="Hass P.E."/>
            <person name="Heldens S."/>
            <person name="Huang A."/>
            <person name="Kim H.S."/>
            <person name="Klimowski L."/>
            <person name="Jin Y."/>
            <person name="Johnson S."/>
            <person name="Lee J."/>
            <person name="Lewis L."/>
            <person name="Liao D."/>
            <person name="Mark M.R."/>
            <person name="Robbie E."/>
            <person name="Sanchez C."/>
            <person name="Schoenfeld J."/>
            <person name="Seshagiri S."/>
            <person name="Simmons L."/>
            <person name="Singh J."/>
            <person name="Smith V."/>
            <person name="Stinson J."/>
            <person name="Vagts A."/>
            <person name="Vandlen R.L."/>
            <person name="Watanabe C."/>
            <person name="Wieand D."/>
            <person name="Woods K."/>
            <person name="Xie M.-H."/>
            <person name="Yansura D.G."/>
            <person name="Yi S."/>
            <person name="Yu G."/>
            <person name="Yuan J."/>
            <person name="Zhang M."/>
            <person name="Zhang Z."/>
            <person name="Goddard A.D."/>
            <person name="Wood W.I."/>
            <person name="Godowski P.J."/>
            <person name="Gray A.M."/>
        </authorList>
    </citation>
    <scope>NUCLEOTIDE SEQUENCE [LARGE SCALE MRNA]</scope>
</reference>
<reference key="6">
    <citation type="journal article" date="2007" name="BMC Genomics">
        <title>The full-ORF clone resource of the German cDNA consortium.</title>
        <authorList>
            <person name="Bechtel S."/>
            <person name="Rosenfelder H."/>
            <person name="Duda A."/>
            <person name="Schmidt C.P."/>
            <person name="Ernst U."/>
            <person name="Wellenreuther R."/>
            <person name="Mehrle A."/>
            <person name="Schuster C."/>
            <person name="Bahr A."/>
            <person name="Bloecker H."/>
            <person name="Heubner D."/>
            <person name="Hoerlein A."/>
            <person name="Michel G."/>
            <person name="Wedler H."/>
            <person name="Koehrer K."/>
            <person name="Ottenwaelder B."/>
            <person name="Poustka A."/>
            <person name="Wiemann S."/>
            <person name="Schupp I."/>
        </authorList>
    </citation>
    <scope>NUCLEOTIDE SEQUENCE [LARGE SCALE MRNA]</scope>
    <scope>VARIANT GLU-116</scope>
    <source>
        <tissue>Fetal kidney</tissue>
    </source>
</reference>
<reference key="7">
    <citation type="journal article" date="2004" name="Genome Res.">
        <title>The status, quality, and expansion of the NIH full-length cDNA project: the Mammalian Gene Collection (MGC).</title>
        <authorList>
            <consortium name="The MGC Project Team"/>
        </authorList>
    </citation>
    <scope>NUCLEOTIDE SEQUENCE [LARGE SCALE MRNA]</scope>
    <scope>VARIANT GLU-116</scope>
    <source>
        <tissue>Colon</tissue>
        <tissue>Muscle</tissue>
    </source>
</reference>
<reference key="8">
    <citation type="journal article" date="1999" name="Biochim. Biophys. Acta">
        <title>Identification and characterization of large galactosyltransferase gene families: galactosyltransferases for all functions.</title>
        <authorList>
            <person name="Amado M."/>
            <person name="Almeida R."/>
            <person name="Schwientek T."/>
            <person name="Clausen H."/>
        </authorList>
    </citation>
    <scope>REVIEW</scope>
</reference>
<reference key="9">
    <citation type="journal article" date="2003" name="J. Biol. Chem.">
        <title>Beta 1,4-galactosyltransferase (beta 4GalT)-IV is specific for GlcNAc 6-O-sulfate. Beta 4GalT-IV acts on keratan sulfate-related glycans and a precursor glycan of 6-sulfosialyl-Lewis X.</title>
        <authorList>
            <person name="Seko A."/>
            <person name="Dohmae N."/>
            <person name="Takio K."/>
            <person name="Yamashita K."/>
        </authorList>
    </citation>
    <scope>FUNCTION</scope>
    <scope>CATALYTIC ACTIVITY</scope>
    <scope>PATHWAY</scope>
    <scope>BIOPHYSICOCHEMICAL PROPERTIES</scope>
</reference>
<reference key="10">
    <citation type="journal article" date="2007" name="J. Biol. Chem.">
        <title>Enzymes responsible for synthesis of corneal keratan sulfate glycosaminoglycans.</title>
        <authorList>
            <person name="Kitayama K."/>
            <person name="Hayashida Y."/>
            <person name="Nishida K."/>
            <person name="Akama T.O."/>
        </authorList>
    </citation>
    <scope>FUNCTION</scope>
    <scope>TISSUE SPECIFICITY</scope>
</reference>
<reference key="11">
    <citation type="journal article" date="2020" name="Glycoconj. J.">
        <title>N-glycosylation of the human beta1,4-galactosyltransferase 4 is crucial for its activity and Golgi localization.</title>
        <authorList>
            <person name="Shauchuk A."/>
            <person name="Szulc B."/>
            <person name="Maszczak-Seneczko D."/>
            <person name="Wiertelak W."/>
            <person name="Skurska E."/>
            <person name="Olczak M."/>
        </authorList>
    </citation>
    <scope>FUNCTION</scope>
    <scope>GLYCOSYLATION AT ASN-220 AND ASN-335</scope>
    <scope>MUTAGENESIS OF THR-6; THR-222 AND THR-337</scope>
    <scope>SUBCELLULAR LOCATION</scope>
    <scope>INTERACTION WITH SLC35A2</scope>
</reference>
<proteinExistence type="evidence at protein level"/>
<comment type="function">
    <text evidence="4 6 9">Galactose (Gal) transferase involved in the synthesis of terminal N-acetyllactosamine (LacNac) unit present on glycan chains of glycoproteins and glycosphingolipids (PubMed:12511560, PubMed:17690104, PubMed:32827291, PubMed:9792633). Catalyzes the transfer of Gal residue via a beta1-&gt;4 linkage from UDP-Gal to the non-reducing terminal N-acetyl glucosamine 6-O-sulfate (6-O-sulfoGlcNAc) in the linearly growing chain of both N- and O-linked keratan sulfate proteoglycans. Cooperates with B3GNT7 N-acetyl glucosamine transferase and CHST6 and CHST1 sulfotransferases to construct and elongate mono- and disulfated disaccharide units [-&gt;3Galbeta1-&gt;4(6-sulfoGlcNAcbeta)1-&gt;] and [-&gt;3(6-sulfoGalbeta)1-&gt;4(6-sulfoGlcNAcbeta)1-&gt;] within keratan sulfate polymer (PubMed:17690104). Transfers Gal residue via a beta1-&gt;4 linkage to terminal 6-O-sulfoGlcNAc within the LacNac unit of core 2 O-glycans forming 6-sulfo-sialyl-Lewis X (sLex). May contribute to the generation of sLex epitope on mucin-type glycoproteins that serve as ligands for SELL/L-selectin, a major regulator of leukocyte migration (PubMed:12511560). In the biosynthesis pathway of neolacto-series glycosphingolipids, transfers Gal residue via a beta1-&gt;4 linkage to terminal GlcNAc of a lactotriaosylceramide (Lc3Cer) acceptor to form a neolactotetraosylceramide (PubMed:9792633).</text>
</comment>
<comment type="catalytic activity">
    <reaction evidence="9">
        <text>N-acetyl-D-glucosamine + UDP-alpha-D-galactose = beta-D-galactosyl-(1-&gt;4)-N-acetyl-D-glucosamine + UDP + H(+)</text>
        <dbReference type="Rhea" id="RHEA:17745"/>
        <dbReference type="ChEBI" id="CHEBI:15378"/>
        <dbReference type="ChEBI" id="CHEBI:58223"/>
        <dbReference type="ChEBI" id="CHEBI:60152"/>
        <dbReference type="ChEBI" id="CHEBI:66914"/>
        <dbReference type="ChEBI" id="CHEBI:506227"/>
        <dbReference type="EC" id="2.4.1.90"/>
    </reaction>
    <physiologicalReaction direction="left-to-right" evidence="9">
        <dbReference type="Rhea" id="RHEA:17746"/>
    </physiologicalReaction>
</comment>
<comment type="catalytic activity">
    <reaction evidence="9">
        <text>a beta-D-GlcNAc-(1-&gt;3)-beta-D-Gal-(1-&gt;4)-beta-D-Glc-(1&lt;-&gt;1)-Cer(d18:1(4E)) + UDP-alpha-D-galactose = a neolactoside nLc4Cer(d18:1(4E)) + UDP + H(+)</text>
        <dbReference type="Rhea" id="RHEA:31499"/>
        <dbReference type="ChEBI" id="CHEBI:15378"/>
        <dbReference type="ChEBI" id="CHEBI:17006"/>
        <dbReference type="ChEBI" id="CHEBI:17103"/>
        <dbReference type="ChEBI" id="CHEBI:58223"/>
        <dbReference type="ChEBI" id="CHEBI:66914"/>
        <dbReference type="EC" id="2.4.1.275"/>
    </reaction>
    <physiologicalReaction direction="left-to-right" evidence="9">
        <dbReference type="Rhea" id="RHEA:31500"/>
    </physiologicalReaction>
</comment>
<comment type="catalytic activity">
    <reaction evidence="13">
        <text>3-O-{beta-D-galactosyl-(1-&gt;3)-[6-O-sulfo-N-acetyl-beta-D-glucosaminyl-(1-&gt;6)]-N-acetyl-alpha-D-galactosaminyl}-L-seryl-[protein] + UDP-alpha-D-galactose = 3-O-{beta-D-galactosyl-(1-&gt;3)-[beta-D-galactosyl-(1-&gt;4)-6-O-sulfo-N-acetyl-beta-D-glucosaminyl-(1-&gt;6)]-N-acetyl-alpha-D-galactosaminyl}-L-seryl-[protein] + UDP + H(+)</text>
        <dbReference type="Rhea" id="RHEA:67948"/>
        <dbReference type="Rhea" id="RHEA-COMP:17367"/>
        <dbReference type="Rhea" id="RHEA-COMP:17398"/>
        <dbReference type="ChEBI" id="CHEBI:15378"/>
        <dbReference type="ChEBI" id="CHEBI:58223"/>
        <dbReference type="ChEBI" id="CHEBI:66914"/>
        <dbReference type="ChEBI" id="CHEBI:176494"/>
        <dbReference type="ChEBI" id="CHEBI:176635"/>
    </reaction>
    <physiologicalReaction direction="left-to-right" evidence="13">
        <dbReference type="Rhea" id="RHEA:67949"/>
    </physiologicalReaction>
</comment>
<comment type="catalytic activity">
    <reaction evidence="13">
        <text>3-O-{beta-D-galactosyl-(1-&gt;3)-[6-O-sulfo-N-acetyl-beta-D-glucosaminyl-(1-&gt;6)]-N-acetyl-alpha-D-galactosaminyl}-L-threonyl-[protein] + UDP-alpha-D-galactose = 3-O-{beta-D-galactosyl-(1-&gt;3)-[beta-D-galactosyl-(1-&gt;4)-6-O-sulfo-N-acetyl-beta-D-glucosaminyl-(1-&gt;6)]-N-acetyl-alpha-D-galactosaminyl}-L-threonyl-[protein] + UDP + H(+)</text>
        <dbReference type="Rhea" id="RHEA:67872"/>
        <dbReference type="Rhea" id="RHEA-COMP:17370"/>
        <dbReference type="Rhea" id="RHEA-COMP:17397"/>
        <dbReference type="ChEBI" id="CHEBI:15378"/>
        <dbReference type="ChEBI" id="CHEBI:58223"/>
        <dbReference type="ChEBI" id="CHEBI:66914"/>
        <dbReference type="ChEBI" id="CHEBI:176493"/>
        <dbReference type="ChEBI" id="CHEBI:176634"/>
    </reaction>
    <physiologicalReaction direction="left-to-right" evidence="13">
        <dbReference type="Rhea" id="RHEA:67873"/>
    </physiologicalReaction>
</comment>
<comment type="cofactor">
    <cofactor evidence="1">
        <name>Mn(2+)</name>
        <dbReference type="ChEBI" id="CHEBI:29035"/>
    </cofactor>
</comment>
<comment type="activity regulation">
    <text evidence="9">Up-regulated by LALBA.</text>
</comment>
<comment type="biophysicochemical properties">
    <kinetics>
        <KM evidence="9">0.031 mM for UDP-Gal</KM>
        <KM evidence="3">238 uM for GlcNAc-B-S-pNP</KM>
        <KM evidence="4">0.43 mM for SO3-&gt;6GlcNAc (6SGN)</KM>
        <KM evidence="4">330 mM for GlcNAc</KM>
        <KM evidence="4">0.11 mM for SO3 -&gt;6GlcNAcbeta1-&gt;2Manalpha1-&gt;3(Manalpha1-&gt;6)Manbeta1-&gt;4GlcNAcbeta1-&gt;4( Fucalpha1-&gt;6)GlcNAc (6S-biGP)</KM>
        <KM evidence="4">7.7 mM for GlcNAcbeta1-&gt;2Manalpha1-&gt;3(Manalpha1-&gt;6)Manbeta1-&gt;4GlcNAcbeta1-&gt;4(Fuc alpha1-&gt;6)GlcNAc (biGP)</KM>
        <KM evidence="4">0.091 mM for SO3-&gt;6GlcNAcbeta1-&gt;6(Galbeta1-&gt;3)GalNAcalpha1-O-pNP (6S-core2-O-pNP)</KM>
        <KM evidence="4">0.5 mM for GlcNAcbeta1-&gt;6(Galbeta1-&gt;3)GalNAcalpha1-O-pNP (core2-O-pNP)</KM>
        <KM evidence="4">0.38 mM for SO3-&gt;6GlcNAcbeta1-&gt;3Galbeta1-&gt;4(SO3-&gt;6)GlcNAc (agL2L2)</KM>
        <KM evidence="4">0.63 mM for SO3-&gt;6GlcNAcbeta1-&gt;3(SO3-&gt;6)Galbeta1-&gt;4(SO3-&gt;6)GlcNAc (agL2L4)</KM>
        <Vmax evidence="4">3.6 nmol/min/mg enzyme toward SO3-&gt;6GlcNAc (6SGN)</Vmax>
        <Vmax evidence="4">1.5 nmol/min/mg enzyme toward GlcNAc</Vmax>
        <Vmax evidence="4">3.2 nmol/min/mg enzyme toward 6GlcNAcbeta1-&gt;2Manalpha1-&gt;3(Manalpha1-&gt;6)Manbeta1-&gt;4GlcNAcbeta1-&gt;4(Fu calpha1-&gt;6)GlcNAc (6S-biGP)</Vmax>
        <Vmax evidence="4">0.42 nmol/min/mg enzyme toward GlcNAcbeta1-&gt;2Manalpha1-&gt;3(Manalpha1-&gt;6)Manbeta1-&gt;4GlcNAcbeta1-&gt;4(Fuc alpha1-&gt;6)GlcNAc (biGP)</Vmax>
        <Vmax evidence="4">4.8 nmol/min/mg enzyme toward SO3-&gt;6GlcNAcbeta1-&gt;6(Galbeta1-&gt;3)GalNAcalpha1-O-pNP (6S-core2-O-pNP)</Vmax>
        <Vmax evidence="4">1.2 nmol/min/mg enzyme toward GlcNAcbeta1-&gt;6(Galbeta1-&gt;3)GalNAcalpha1-O-pNP (core2-O-pNP)</Vmax>
        <Vmax evidence="4">7.8 nmol/min/mg enzyme toward SO3-&gt;6GlcNAcbeta1-&gt;3Galbeta1-&gt;4(SO3-&gt;6)GlcNAc (agL2L2)</Vmax>
        <Vmax evidence="4">7.8 nmol/min/mg enzyme toward SO3-&gt;6GlcNAcbeta1-&gt;3(SO3-&gt;6)Galbeta1-&gt;4(SO3-&gt;6)GlcNAc (agL2L4)</Vmax>
    </kinetics>
</comment>
<comment type="pathway">
    <text evidence="13">Protein modification; protein glycosylation.</text>
</comment>
<comment type="pathway">
    <text evidence="14">Glycolipid biosynthesis.</text>
</comment>
<comment type="subunit">
    <text evidence="8">Interacts with SLC35A2 (isoform 2; UGT1).</text>
</comment>
<comment type="subcellular location">
    <subcellularLocation>
        <location evidence="8">Golgi apparatus membrane</location>
        <topology evidence="2">Single-pass type II membrane protein</topology>
    </subcellularLocation>
    <subcellularLocation>
        <location evidence="8">Secreted</location>
    </subcellularLocation>
</comment>
<comment type="tissue specificity">
    <text evidence="6 9">Highest expression is observed in placenta, pancreas, kidney and heart (PubMed:9792633). Expressed in corneal epithelial cells (PubMed:17690104).</text>
</comment>
<comment type="PTM">
    <text evidence="8">N-glycosylated.</text>
</comment>
<comment type="similarity">
    <text evidence="12">Belongs to the glycosyltransferase 7 family.</text>
</comment>
<comment type="online information" name="Functional Glycomics Gateway - GTase">
    <link uri="http://www.functionalglycomics.org/glycomics/molecule/jsp/glycoEnzyme/viewGlycoEnzyme.jsp?gbpId=gt_hum_439"/>
    <text>Beta-1,4-galactosyltransferase 4</text>
</comment>